<name>MSHC_MYCTU</name>
<proteinExistence type="evidence at protein level"/>
<accession>P9WJM9</accession>
<accession>L0T8X7</accession>
<accession>O33264</accession>
<accession>P67017</accession>
<reference key="1">
    <citation type="journal article" date="1998" name="Nature">
        <title>Deciphering the biology of Mycobacterium tuberculosis from the complete genome sequence.</title>
        <authorList>
            <person name="Cole S.T."/>
            <person name="Brosch R."/>
            <person name="Parkhill J."/>
            <person name="Garnier T."/>
            <person name="Churcher C.M."/>
            <person name="Harris D.E."/>
            <person name="Gordon S.V."/>
            <person name="Eiglmeier K."/>
            <person name="Gas S."/>
            <person name="Barry C.E. III"/>
            <person name="Tekaia F."/>
            <person name="Badcock K."/>
            <person name="Basham D."/>
            <person name="Brown D."/>
            <person name="Chillingworth T."/>
            <person name="Connor R."/>
            <person name="Davies R.M."/>
            <person name="Devlin K."/>
            <person name="Feltwell T."/>
            <person name="Gentles S."/>
            <person name="Hamlin N."/>
            <person name="Holroyd S."/>
            <person name="Hornsby T."/>
            <person name="Jagels K."/>
            <person name="Krogh A."/>
            <person name="McLean J."/>
            <person name="Moule S."/>
            <person name="Murphy L.D."/>
            <person name="Oliver S."/>
            <person name="Osborne J."/>
            <person name="Quail M.A."/>
            <person name="Rajandream M.A."/>
            <person name="Rogers J."/>
            <person name="Rutter S."/>
            <person name="Seeger K."/>
            <person name="Skelton S."/>
            <person name="Squares S."/>
            <person name="Squares R."/>
            <person name="Sulston J.E."/>
            <person name="Taylor K."/>
            <person name="Whitehead S."/>
            <person name="Barrell B.G."/>
        </authorList>
    </citation>
    <scope>NUCLEOTIDE SEQUENCE [LARGE SCALE GENOMIC DNA]</scope>
    <source>
        <strain>ATCC 25618 / H37Rv</strain>
    </source>
</reference>
<reference key="2">
    <citation type="journal article" date="2002" name="Biochemistry">
        <title>ATP-dependent L-cysteine:1D-myo-inosityl 2-amino-2-deoxy-alpha-D-glucopyranoside ligase, mycothiol biosynthesis enzyme MshC, is related to class I cysteinyl-tRNA synthetases.</title>
        <authorList>
            <person name="Sareen D."/>
            <person name="Steffek M."/>
            <person name="Newton G.L."/>
            <person name="Fahey R.C."/>
        </authorList>
    </citation>
    <scope>CATALYTIC ACTIVITY</scope>
</reference>
<reference key="3">
    <citation type="journal article" date="2011" name="Mol. Cell. Proteomics">
        <title>Proteogenomic analysis of Mycobacterium tuberculosis by high resolution mass spectrometry.</title>
        <authorList>
            <person name="Kelkar D.S."/>
            <person name="Kumar D."/>
            <person name="Kumar P."/>
            <person name="Balakrishnan L."/>
            <person name="Muthusamy B."/>
            <person name="Yadav A.K."/>
            <person name="Shrivastava P."/>
            <person name="Marimuthu A."/>
            <person name="Anand S."/>
            <person name="Sundaram H."/>
            <person name="Kingsbury R."/>
            <person name="Harsha H.C."/>
            <person name="Nair B."/>
            <person name="Prasad T.S."/>
            <person name="Chauhan D.S."/>
            <person name="Katoch K."/>
            <person name="Katoch V.M."/>
            <person name="Kumar P."/>
            <person name="Chaerkady R."/>
            <person name="Ramachandran S."/>
            <person name="Dash D."/>
            <person name="Pandey A."/>
        </authorList>
    </citation>
    <scope>IDENTIFICATION BY MASS SPECTROMETRY [LARGE SCALE ANALYSIS]</scope>
    <source>
        <strain>ATCC 25618 / H37Rv</strain>
    </source>
</reference>
<organism>
    <name type="scientific">Mycobacterium tuberculosis (strain ATCC 25618 / H37Rv)</name>
    <dbReference type="NCBI Taxonomy" id="83332"/>
    <lineage>
        <taxon>Bacteria</taxon>
        <taxon>Bacillati</taxon>
        <taxon>Actinomycetota</taxon>
        <taxon>Actinomycetes</taxon>
        <taxon>Mycobacteriales</taxon>
        <taxon>Mycobacteriaceae</taxon>
        <taxon>Mycobacterium</taxon>
        <taxon>Mycobacterium tuberculosis complex</taxon>
    </lineage>
</organism>
<comment type="function">
    <text>Catalyzes the ATP-dependent condensation of GlcN-Ins and L-cysteine to form L-Cys-GlcN-Ins.</text>
</comment>
<comment type="catalytic activity">
    <reaction evidence="2">
        <text>1D-myo-inositol 2-amino-2-deoxy-alpha-D-glucopyranoside + L-cysteine + ATP = 1D-myo-inositol 2-(L-cysteinylamino)-2-deoxy-alpha-D-glucopyranoside + AMP + diphosphate + H(+)</text>
        <dbReference type="Rhea" id="RHEA:26176"/>
        <dbReference type="ChEBI" id="CHEBI:15378"/>
        <dbReference type="ChEBI" id="CHEBI:30616"/>
        <dbReference type="ChEBI" id="CHEBI:33019"/>
        <dbReference type="ChEBI" id="CHEBI:35235"/>
        <dbReference type="ChEBI" id="CHEBI:58886"/>
        <dbReference type="ChEBI" id="CHEBI:58887"/>
        <dbReference type="ChEBI" id="CHEBI:456215"/>
        <dbReference type="EC" id="6.3.1.13"/>
    </reaction>
</comment>
<comment type="cofactor">
    <cofactor evidence="1">
        <name>Zn(2+)</name>
        <dbReference type="ChEBI" id="CHEBI:29105"/>
    </cofactor>
    <text evidence="1">Binds 1 zinc ion per subunit.</text>
</comment>
<comment type="subunit">
    <text evidence="1">Monomer.</text>
</comment>
<comment type="similarity">
    <text evidence="3">Belongs to the class-I aminoacyl-tRNA synthetase family. MshC subfamily.</text>
</comment>
<sequence>MQSWYCPPVPVLPGRGPQLRLYDSADRQVRPVAPGSKATMYVCGITPYDATHLGHAATYVTFDLIHRLWLDLGHELHYVQNITDIDDPLFERADRDGVDWRDLAQAEVALFCEDMAALRVLPPQDYVGATEAIAEMVELIEKMLACGAAYVIDREMGEYQDIYFRADATLQFGYESGYDRDTMLRLCEERGGDPRRPGKSDELDALLWRAARPGEPSWPSPFGPGRPGWHVECAAIALSRIGSGLDIQGGGSDLIFPHHEFTAAHAECVSGERRFARHYVHAGMIGWDGHKMSKSRGNLVLVSALRAQDVEPSAVRLGLLAGHYRADRFWSQQVLDEATARLHRWRTATALPAGPAAVDVVARVRRYLADDLDTPKAIAALDGWVTDAVEYGGHDAGAPKLVATAIDALLGVDL</sequence>
<evidence type="ECO:0000250" key="1"/>
<evidence type="ECO:0000269" key="2">
    <source>
    </source>
</evidence>
<evidence type="ECO:0000305" key="3"/>
<gene>
    <name type="primary">mshC</name>
    <name type="synonym">cysS2</name>
    <name type="ordered locus">Rv2130c</name>
    <name type="ORF">MTCY261.29c</name>
</gene>
<feature type="chain" id="PRO_0000159442" description="L-cysteine:1D-myo-inositol 2-amino-2-deoxy-alpha-D-glucopyranoside ligase">
    <location>
        <begin position="1"/>
        <end position="414"/>
    </location>
</feature>
<feature type="short sequence motif" description="'HIGH' region">
    <location>
        <begin position="45"/>
        <end position="55"/>
    </location>
</feature>
<feature type="short sequence motif" description="'ERGGDP' region">
    <location>
        <begin position="189"/>
        <end position="194"/>
    </location>
</feature>
<feature type="short sequence motif" description="'KMSKS' region">
    <location>
        <begin position="291"/>
        <end position="295"/>
    </location>
</feature>
<feature type="binding site" evidence="1">
    <location>
        <begin position="43"/>
        <end position="46"/>
    </location>
    <ligand>
        <name>L-cysteinyl-5'-AMP</name>
        <dbReference type="ChEBI" id="CHEBI:144924"/>
    </ligand>
</feature>
<feature type="binding site" evidence="1">
    <location>
        <position position="43"/>
    </location>
    <ligand>
        <name>Zn(2+)</name>
        <dbReference type="ChEBI" id="CHEBI:29105"/>
    </ligand>
</feature>
<feature type="binding site" evidence="1">
    <location>
        <position position="58"/>
    </location>
    <ligand>
        <name>L-cysteinyl-5'-AMP</name>
        <dbReference type="ChEBI" id="CHEBI:144924"/>
    </ligand>
</feature>
<feature type="binding site" evidence="1">
    <location>
        <begin position="81"/>
        <end position="83"/>
    </location>
    <ligand>
        <name>L-cysteinyl-5'-AMP</name>
        <dbReference type="ChEBI" id="CHEBI:144924"/>
    </ligand>
</feature>
<feature type="binding site" evidence="1">
    <location>
        <position position="229"/>
    </location>
    <ligand>
        <name>L-cysteinyl-5'-AMP</name>
        <dbReference type="ChEBI" id="CHEBI:144924"/>
    </ligand>
</feature>
<feature type="binding site" evidence="1">
    <location>
        <position position="233"/>
    </location>
    <ligand>
        <name>Zn(2+)</name>
        <dbReference type="ChEBI" id="CHEBI:29105"/>
    </ligand>
</feature>
<feature type="binding site" evidence="1">
    <location>
        <begin position="251"/>
        <end position="253"/>
    </location>
    <ligand>
        <name>L-cysteinyl-5'-AMP</name>
        <dbReference type="ChEBI" id="CHEBI:144924"/>
    </ligand>
</feature>
<feature type="binding site" evidence="1">
    <location>
        <position position="258"/>
    </location>
    <ligand>
        <name>Zn(2+)</name>
        <dbReference type="ChEBI" id="CHEBI:29105"/>
    </ligand>
</feature>
<feature type="binding site" evidence="1">
    <location>
        <position position="285"/>
    </location>
    <ligand>
        <name>L-cysteinyl-5'-AMP</name>
        <dbReference type="ChEBI" id="CHEBI:144924"/>
    </ligand>
</feature>
<keyword id="KW-0067">ATP-binding</keyword>
<keyword id="KW-0436">Ligase</keyword>
<keyword id="KW-0479">Metal-binding</keyword>
<keyword id="KW-0547">Nucleotide-binding</keyword>
<keyword id="KW-1185">Reference proteome</keyword>
<keyword id="KW-0862">Zinc</keyword>
<protein>
    <recommendedName>
        <fullName>L-cysteine:1D-myo-inositol 2-amino-2-deoxy-alpha-D-glucopyranoside ligase</fullName>
        <shortName>L-Cys:GlcN-Ins ligase</shortName>
        <ecNumber>6.3.1.13</ecNumber>
    </recommendedName>
    <alternativeName>
        <fullName>Mycothiol ligase</fullName>
        <shortName>MSH ligase</shortName>
    </alternativeName>
</protein>
<dbReference type="EC" id="6.3.1.13"/>
<dbReference type="EMBL" id="AL123456">
    <property type="protein sequence ID" value="CCP44905.1"/>
    <property type="molecule type" value="Genomic_DNA"/>
</dbReference>
<dbReference type="PIR" id="E70514">
    <property type="entry name" value="E70514"/>
</dbReference>
<dbReference type="RefSeq" id="NP_216646.1">
    <property type="nucleotide sequence ID" value="NC_000962.3"/>
</dbReference>
<dbReference type="RefSeq" id="WP_003411091.1">
    <property type="nucleotide sequence ID" value="NZ_NVQJ01000044.1"/>
</dbReference>
<dbReference type="SMR" id="P9WJM9"/>
<dbReference type="STRING" id="83332.Rv2130c"/>
<dbReference type="BindingDB" id="P9WJM9"/>
<dbReference type="ChEMBL" id="CHEMBL1744527"/>
<dbReference type="PaxDb" id="83332-Rv2130c"/>
<dbReference type="DNASU" id="887492"/>
<dbReference type="GeneID" id="887492"/>
<dbReference type="KEGG" id="mtu:Rv2130c"/>
<dbReference type="KEGG" id="mtv:RVBD_2130c"/>
<dbReference type="TubercuList" id="Rv2130c"/>
<dbReference type="eggNOG" id="COG0215">
    <property type="taxonomic scope" value="Bacteria"/>
</dbReference>
<dbReference type="InParanoid" id="P9WJM9"/>
<dbReference type="OrthoDB" id="9815130at2"/>
<dbReference type="PhylomeDB" id="P9WJM9"/>
<dbReference type="BRENDA" id="6.3.1.13">
    <property type="organism ID" value="3445"/>
</dbReference>
<dbReference type="Reactome" id="R-MTU-879299">
    <property type="pathway name" value="Mycothiol biosynthesis"/>
</dbReference>
<dbReference type="PRO" id="PR:P9WJM9"/>
<dbReference type="Proteomes" id="UP000001584">
    <property type="component" value="Chromosome"/>
</dbReference>
<dbReference type="GO" id="GO:0005737">
    <property type="term" value="C:cytoplasm"/>
    <property type="evidence" value="ECO:0000318"/>
    <property type="project" value="GO_Central"/>
</dbReference>
<dbReference type="GO" id="GO:0005829">
    <property type="term" value="C:cytosol"/>
    <property type="evidence" value="ECO:0000318"/>
    <property type="project" value="GO_Central"/>
</dbReference>
<dbReference type="GO" id="GO:0005886">
    <property type="term" value="C:plasma membrane"/>
    <property type="evidence" value="ECO:0007005"/>
    <property type="project" value="MTBBASE"/>
</dbReference>
<dbReference type="GO" id="GO:0005524">
    <property type="term" value="F:ATP binding"/>
    <property type="evidence" value="ECO:0000318"/>
    <property type="project" value="GO_Central"/>
</dbReference>
<dbReference type="GO" id="GO:0035446">
    <property type="term" value="F:cysteine-glucosaminylinositol ligase activity"/>
    <property type="evidence" value="ECO:0000314"/>
    <property type="project" value="MTBBASE"/>
</dbReference>
<dbReference type="GO" id="GO:0008270">
    <property type="term" value="F:zinc ion binding"/>
    <property type="evidence" value="ECO:0007669"/>
    <property type="project" value="UniProtKB-UniRule"/>
</dbReference>
<dbReference type="GO" id="GO:0006423">
    <property type="term" value="P:cysteinyl-tRNA aminoacylation"/>
    <property type="evidence" value="ECO:0000318"/>
    <property type="project" value="GO_Central"/>
</dbReference>
<dbReference type="GO" id="GO:0010125">
    <property type="term" value="P:mycothiol biosynthetic process"/>
    <property type="evidence" value="ECO:0000314"/>
    <property type="project" value="MTBBASE"/>
</dbReference>
<dbReference type="CDD" id="cd07955">
    <property type="entry name" value="Anticodon_Ia_Cys_like"/>
    <property type="match status" value="1"/>
</dbReference>
<dbReference type="CDD" id="cd00672">
    <property type="entry name" value="CysRS_core"/>
    <property type="match status" value="1"/>
</dbReference>
<dbReference type="FunFam" id="1.20.120.640:FF:000001">
    <property type="entry name" value="L-cysteine:1D-myo-inositol 2-amino-2-deoxy-alpha-D-glucopyranoside ligase"/>
    <property type="match status" value="1"/>
</dbReference>
<dbReference type="FunFam" id="3.40.50.620:FF:000134">
    <property type="entry name" value="L-cysteine:1D-myo-inositol 2-amino-2-deoxy-alpha-D-glucopyranoside ligase"/>
    <property type="match status" value="1"/>
</dbReference>
<dbReference type="Gene3D" id="1.20.120.640">
    <property type="entry name" value="Anticodon-binding domain of a subclass of class I aminoacyl-tRNA synthetases"/>
    <property type="match status" value="1"/>
</dbReference>
<dbReference type="Gene3D" id="3.40.50.620">
    <property type="entry name" value="HUPs"/>
    <property type="match status" value="1"/>
</dbReference>
<dbReference type="HAMAP" id="MF_01697">
    <property type="entry name" value="MshC"/>
    <property type="match status" value="1"/>
</dbReference>
<dbReference type="InterPro" id="IPR024909">
    <property type="entry name" value="Cys-tRNA/MSH_ligase"/>
</dbReference>
<dbReference type="InterPro" id="IPR017812">
    <property type="entry name" value="Mycothiol_ligase_MshC"/>
</dbReference>
<dbReference type="InterPro" id="IPR014729">
    <property type="entry name" value="Rossmann-like_a/b/a_fold"/>
</dbReference>
<dbReference type="InterPro" id="IPR032678">
    <property type="entry name" value="tRNA-synt_1_cat_dom"/>
</dbReference>
<dbReference type="NCBIfam" id="TIGR03447">
    <property type="entry name" value="mycothiol_MshC"/>
    <property type="match status" value="1"/>
</dbReference>
<dbReference type="PANTHER" id="PTHR10890:SF3">
    <property type="entry name" value="CYSTEINE--TRNA LIGASE, CYTOPLASMIC"/>
    <property type="match status" value="1"/>
</dbReference>
<dbReference type="PANTHER" id="PTHR10890">
    <property type="entry name" value="CYSTEINYL-TRNA SYNTHETASE"/>
    <property type="match status" value="1"/>
</dbReference>
<dbReference type="Pfam" id="PF01406">
    <property type="entry name" value="tRNA-synt_1e"/>
    <property type="match status" value="1"/>
</dbReference>
<dbReference type="PRINTS" id="PR00983">
    <property type="entry name" value="TRNASYNTHCYS"/>
</dbReference>
<dbReference type="SUPFAM" id="SSF52374">
    <property type="entry name" value="Nucleotidylyl transferase"/>
    <property type="match status" value="1"/>
</dbReference>